<protein>
    <recommendedName>
        <fullName evidence="7">Biotin-dependent acetyl-/propionyl-coenzyme A carboxylase epsilon subunit</fullName>
    </recommendedName>
</protein>
<accession>P96886</accession>
<accession>I6YBP4</accession>
<accession>L0TEV5</accession>
<feature type="chain" id="PRO_0000452371" description="Biotin-dependent acetyl-/propionyl-coenzyme A carboxylase epsilon subunit">
    <location>
        <begin position="1"/>
        <end position="177"/>
    </location>
</feature>
<feature type="region of interest" description="Disordered" evidence="1">
    <location>
        <begin position="1"/>
        <end position="112"/>
    </location>
</feature>
<feature type="compositionally biased region" description="Polar residues" evidence="1">
    <location>
        <begin position="18"/>
        <end position="100"/>
    </location>
</feature>
<keyword id="KW-1185">Reference proteome</keyword>
<reference key="1">
    <citation type="journal article" date="1998" name="Nature">
        <title>Deciphering the biology of Mycobacterium tuberculosis from the complete genome sequence.</title>
        <authorList>
            <person name="Cole S.T."/>
            <person name="Brosch R."/>
            <person name="Parkhill J."/>
            <person name="Garnier T."/>
            <person name="Churcher C.M."/>
            <person name="Harris D.E."/>
            <person name="Gordon S.V."/>
            <person name="Eiglmeier K."/>
            <person name="Gas S."/>
            <person name="Barry C.E. III"/>
            <person name="Tekaia F."/>
            <person name="Badcock K."/>
            <person name="Basham D."/>
            <person name="Brown D."/>
            <person name="Chillingworth T."/>
            <person name="Connor R."/>
            <person name="Davies R.M."/>
            <person name="Devlin K."/>
            <person name="Feltwell T."/>
            <person name="Gentles S."/>
            <person name="Hamlin N."/>
            <person name="Holroyd S."/>
            <person name="Hornsby T."/>
            <person name="Jagels K."/>
            <person name="Krogh A."/>
            <person name="McLean J."/>
            <person name="Moule S."/>
            <person name="Murphy L.D."/>
            <person name="Oliver S."/>
            <person name="Osborne J."/>
            <person name="Quail M.A."/>
            <person name="Rajandream M.A."/>
            <person name="Rogers J."/>
            <person name="Rutter S."/>
            <person name="Seeger K."/>
            <person name="Skelton S."/>
            <person name="Squares S."/>
            <person name="Squares R."/>
            <person name="Sulston J.E."/>
            <person name="Taylor K."/>
            <person name="Whitehead S."/>
            <person name="Barrell B.G."/>
        </authorList>
    </citation>
    <scope>NUCLEOTIDE SEQUENCE [LARGE SCALE GENOMIC DNA]</scope>
    <source>
        <strain>ATCC 25618 / H37Rv</strain>
    </source>
</reference>
<reference key="2">
    <citation type="journal article" date="2006" name="J. Biol. Chem.">
        <title>Identification and characterization of Rv3281 as a novel subunit of a biotin-dependent acyl-CoA carboxylase in Mycobacterium tuberculosis H37Rv.</title>
        <authorList>
            <person name="Oh T.J."/>
            <person name="Daniel J."/>
            <person name="Kim H.J."/>
            <person name="Sirakova T.D."/>
            <person name="Kolattukudy P.E."/>
        </authorList>
    </citation>
    <scope>FUNCTION</scope>
    <scope>SUBUNIT</scope>
    <scope>INDUCTION</scope>
    <scope>DOMAIN</scope>
</reference>
<reference key="3">
    <citation type="journal article" date="2006" name="J. Bacteriol.">
        <title>Biochemical and structural characterization of an essential acyl coenzyme A carboxylase from Mycobacterium tuberculosis.</title>
        <authorList>
            <person name="Gago G."/>
            <person name="Kurth D."/>
            <person name="Diacovich L."/>
            <person name="Tsai S.C."/>
            <person name="Gramajo H."/>
        </authorList>
    </citation>
    <scope>FUNCTION</scope>
    <scope>SUBUNIT</scope>
    <scope>DOMAIN</scope>
</reference>
<reference key="4">
    <citation type="journal article" date="2007" name="J. Bacteriol.">
        <title>AccD6, a member of the Fas II locus, is a functional carboxyltransferase subunit of the acyl-coenzyme A carboxylase in Mycobacterium tuberculosis.</title>
        <authorList>
            <person name="Daniel J."/>
            <person name="Oh T.J."/>
            <person name="Lee C.M."/>
            <person name="Kolattukudy P.E."/>
        </authorList>
    </citation>
    <scope>FUNCTION</scope>
    <scope>SUBUNIT</scope>
    <source>
        <strain>H37Rv</strain>
    </source>
</reference>
<reference key="5">
    <citation type="journal article" date="2011" name="Mol. Cell. Proteomics">
        <title>Proteogenomic analysis of Mycobacterium tuberculosis by high resolution mass spectrometry.</title>
        <authorList>
            <person name="Kelkar D.S."/>
            <person name="Kumar D."/>
            <person name="Kumar P."/>
            <person name="Balakrishnan L."/>
            <person name="Muthusamy B."/>
            <person name="Yadav A.K."/>
            <person name="Shrivastava P."/>
            <person name="Marimuthu A."/>
            <person name="Anand S."/>
            <person name="Sundaram H."/>
            <person name="Kingsbury R."/>
            <person name="Harsha H.C."/>
            <person name="Nair B."/>
            <person name="Prasad T.S."/>
            <person name="Chauhan D.S."/>
            <person name="Katoch K."/>
            <person name="Katoch V.M."/>
            <person name="Kumar P."/>
            <person name="Chaerkady R."/>
            <person name="Ramachandran S."/>
            <person name="Dash D."/>
            <person name="Pandey A."/>
        </authorList>
    </citation>
    <scope>IDENTIFICATION BY MASS SPECTROMETRY [LARGE SCALE ANALYSIS]</scope>
    <source>
        <strain>ATCC 25618 / H37Rv</strain>
    </source>
</reference>
<reference key="6">
    <citation type="journal article" date="2017" name="FEBS J.">
        <title>Functional reconstitution of the Mycobacterium tuberculosis long-chain acyl-CoA carboxylase from multiple acyl-CoA subunits.</title>
        <authorList>
            <person name="Bazet Lyonnet B."/>
            <person name="Diacovich L."/>
            <person name="Gago G."/>
            <person name="Spina L."/>
            <person name="Bardou F."/>
            <person name="Lemassu A."/>
            <person name="Quemard A."/>
            <person name="Gramajo H."/>
        </authorList>
    </citation>
    <scope>FUNCTION</scope>
    <scope>SUBUNIT</scope>
</reference>
<proteinExistence type="evidence at protein level"/>
<sequence length="177" mass="19014">MGTCPCESSERNEPVSRVSGTNEVSDGNETNNPAEVSDGNETNNPAEVSDGNETNNPAPVSRVSGTNEVSDGNETNNPAPVSRVSGTNEVSDGNETNNPAPVTEKPLHPHEPHIEILRGQPTDQELAALIAVLGSISGSTPPAQPEPTRWGLPVDQLRYPVFSWQRITLQEMTHMRR</sequence>
<organism>
    <name type="scientific">Mycobacterium tuberculosis (strain ATCC 25618 / H37Rv)</name>
    <dbReference type="NCBI Taxonomy" id="83332"/>
    <lineage>
        <taxon>Bacteria</taxon>
        <taxon>Bacillati</taxon>
        <taxon>Actinomycetota</taxon>
        <taxon>Actinomycetes</taxon>
        <taxon>Mycobacteriales</taxon>
        <taxon>Mycobacteriaceae</taxon>
        <taxon>Mycobacterium</taxon>
        <taxon>Mycobacterium tuberculosis complex</taxon>
    </lineage>
</organism>
<dbReference type="EMBL" id="AL123456">
    <property type="protein sequence ID" value="CCP46100.1"/>
    <property type="molecule type" value="Genomic_DNA"/>
</dbReference>
<dbReference type="RefSeq" id="NP_217798.1">
    <property type="nucleotide sequence ID" value="NC_000962.3"/>
</dbReference>
<dbReference type="RefSeq" id="WP_010886160.1">
    <property type="nucleotide sequence ID" value="NZ_NVQJ01000003.1"/>
</dbReference>
<dbReference type="STRING" id="83332.Rv3281"/>
<dbReference type="PaxDb" id="83332-Rv3281"/>
<dbReference type="DNASU" id="888732"/>
<dbReference type="GeneID" id="888732"/>
<dbReference type="KEGG" id="mtu:Rv3281"/>
<dbReference type="KEGG" id="mtv:RVBD_3281"/>
<dbReference type="PATRIC" id="fig|83332.111.peg.3663"/>
<dbReference type="TubercuList" id="Rv3281"/>
<dbReference type="eggNOG" id="ENOG5031SCM">
    <property type="taxonomic scope" value="Bacteria"/>
</dbReference>
<dbReference type="InParanoid" id="P96886"/>
<dbReference type="OrthoDB" id="4749910at2"/>
<dbReference type="SABIO-RK" id="P96886"/>
<dbReference type="Proteomes" id="UP000001584">
    <property type="component" value="Chromosome"/>
</dbReference>
<dbReference type="GO" id="GO:0009317">
    <property type="term" value="C:acetyl-CoA carboxylase complex"/>
    <property type="evidence" value="ECO:0000314"/>
    <property type="project" value="MTBBASE"/>
</dbReference>
<dbReference type="GO" id="GO:0009274">
    <property type="term" value="C:peptidoglycan-based cell wall"/>
    <property type="evidence" value="ECO:0007005"/>
    <property type="project" value="MTBBASE"/>
</dbReference>
<dbReference type="GO" id="GO:0003989">
    <property type="term" value="F:acetyl-CoA carboxylase activity"/>
    <property type="evidence" value="ECO:0000314"/>
    <property type="project" value="MTBBASE"/>
</dbReference>
<dbReference type="GO" id="GO:0004658">
    <property type="term" value="F:propionyl-CoA carboxylase activity"/>
    <property type="evidence" value="ECO:0000314"/>
    <property type="project" value="MTBBASE"/>
</dbReference>
<dbReference type="GO" id="GO:0015977">
    <property type="term" value="P:carbon fixation"/>
    <property type="evidence" value="ECO:0000314"/>
    <property type="project" value="MTBBASE"/>
</dbReference>
<dbReference type="InterPro" id="IPR032716">
    <property type="entry name" value="ACC_epsilon"/>
</dbReference>
<dbReference type="Pfam" id="PF13822">
    <property type="entry name" value="ACC_epsilon"/>
    <property type="match status" value="1"/>
</dbReference>
<evidence type="ECO:0000256" key="1">
    <source>
        <dbReference type="SAM" id="MobiDB-lite"/>
    </source>
</evidence>
<evidence type="ECO:0000269" key="2">
    <source>
    </source>
</evidence>
<evidence type="ECO:0000269" key="3">
    <source>
    </source>
</evidence>
<evidence type="ECO:0000269" key="4">
    <source>
    </source>
</evidence>
<evidence type="ECO:0000269" key="5">
    <source>
    </source>
</evidence>
<evidence type="ECO:0000303" key="6">
    <source>
    </source>
</evidence>
<evidence type="ECO:0000305" key="7"/>
<evidence type="ECO:0000305" key="8">
    <source>
    </source>
</evidence>
<evidence type="ECO:0000305" key="9">
    <source>
    </source>
</evidence>
<evidence type="ECO:0000312" key="10">
    <source>
        <dbReference type="EMBL" id="CCP46100.1"/>
    </source>
</evidence>
<name>ACCE5_MYCTU</name>
<comment type="function">
    <text evidence="2 3 4 5">Stimulates activity of the AccA3/AccD5 biotin-dependent acyl-CoA carboxylase complex (PubMed:16354663, PubMed:16385038). Interacts with AccD5 and modulates its carboxylase activity for acetyl-CoA and propionyl-CoA (PubMed:16354663, PubMed:16385038). Inhibits activity of the AccA3/AccD6 complex (PubMed:17114269). Is also required for the activity of the long-chain acyl-CoA carboxylase (LCC) complex (PubMed:28222482).</text>
</comment>
<comment type="subunit">
    <text evidence="2 3 4 5">Interacts with the AccA3/AccD5 biotin-dependent acyl-CoA carboxylase complex (PubMed:16354663, PubMed:16385038). Interacts with the AccA3/AccD6 complex (PubMed:17114269). Is also part of the long-chain acyl-CoA carboxylase (LCC) complex, which is composed of AccA3, AccD4, AccD5 and AccE5. The four subunits are essential for activity, but AccD5, together with AccE5, probably plays a structural role rather than a catalytic one (PubMed:28222482).</text>
</comment>
<comment type="induction">
    <text evidence="2">Protein level is maximal in exponential growth phase and declines during late log and stationary phase.</text>
</comment>
<comment type="domain">
    <text evidence="8 9">It is uncertain whether the five sets of tandem repeats at the N terminus are required, or not, for maximal enhancement of carboxylase activity.</text>
</comment>
<gene>
    <name evidence="6" type="primary">accE5</name>
    <name evidence="10" type="ordered locus">Rv3281</name>
</gene>